<evidence type="ECO:0000255" key="1">
    <source>
        <dbReference type="HAMAP-Rule" id="MF_00041"/>
    </source>
</evidence>
<protein>
    <recommendedName>
        <fullName evidence="1">Cysteine--tRNA ligase</fullName>
        <ecNumber evidence="1">6.1.1.16</ecNumber>
    </recommendedName>
    <alternativeName>
        <fullName evidence="1">Cysteinyl-tRNA synthetase</fullName>
        <shortName evidence="1">CysRS</shortName>
    </alternativeName>
</protein>
<keyword id="KW-0030">Aminoacyl-tRNA synthetase</keyword>
<keyword id="KW-0067">ATP-binding</keyword>
<keyword id="KW-0963">Cytoplasm</keyword>
<keyword id="KW-0436">Ligase</keyword>
<keyword id="KW-0479">Metal-binding</keyword>
<keyword id="KW-0547">Nucleotide-binding</keyword>
<keyword id="KW-0648">Protein biosynthesis</keyword>
<keyword id="KW-0862">Zinc</keyword>
<sequence>MLIYDTKLKQKVPFEPLAPKKANIYVCGPTVYDDAHLGHARSAIAFDLLRRTLELSGYEVVLVRNFTDIDDKIINKAFKENKSIQELSSIYIESYTRDLNALNVKKPSLEPKASEYLDAMVSMIETLLEKNIAYKVSNGDIYLDTSKDKDYGSLSVHNSSIEFGRIGLVQEKRLEQDFVLWKSYKGDNDVGFDSPLGKGRPGWHIECSSMVFKTLALANTPYQIDIHAGGVDLLFPHHENEACQTRCAFGVEIAKYWMHNGFVNINNEKMSKSLGNSFFVKDALKNYDGEILRNYLLGVHYRSVLNFNEEDLLVSKKRLDKIYRLKQRVLGSLGNIDLNFKKEILECMQDDLNISKALSVLESMLSSMNEKLDQNPKNKALKGEILANLKFVEELLGIGFKNPTEYFQLGVKESEKQEIEKKIEERKRAKEQKDFIKADSIREELLNHKIALMDTPQGTTWEKLF</sequence>
<gene>
    <name evidence="1" type="primary">cysS</name>
    <name type="ordered locus">Hac_1251</name>
</gene>
<feature type="chain" id="PRO_1000006587" description="Cysteine--tRNA ligase">
    <location>
        <begin position="1"/>
        <end position="465"/>
    </location>
</feature>
<feature type="short sequence motif" description="'HIGH' region">
    <location>
        <begin position="29"/>
        <end position="39"/>
    </location>
</feature>
<feature type="short sequence motif" description="'KMSKS' region">
    <location>
        <begin position="269"/>
        <end position="273"/>
    </location>
</feature>
<feature type="binding site" evidence="1">
    <location>
        <position position="27"/>
    </location>
    <ligand>
        <name>Zn(2+)</name>
        <dbReference type="ChEBI" id="CHEBI:29105"/>
    </ligand>
</feature>
<feature type="binding site" evidence="1">
    <location>
        <position position="207"/>
    </location>
    <ligand>
        <name>Zn(2+)</name>
        <dbReference type="ChEBI" id="CHEBI:29105"/>
    </ligand>
</feature>
<feature type="binding site" evidence="1">
    <location>
        <position position="237"/>
    </location>
    <ligand>
        <name>Zn(2+)</name>
        <dbReference type="ChEBI" id="CHEBI:29105"/>
    </ligand>
</feature>
<feature type="binding site" evidence="1">
    <location>
        <position position="241"/>
    </location>
    <ligand>
        <name>Zn(2+)</name>
        <dbReference type="ChEBI" id="CHEBI:29105"/>
    </ligand>
</feature>
<feature type="binding site" evidence="1">
    <location>
        <position position="272"/>
    </location>
    <ligand>
        <name>ATP</name>
        <dbReference type="ChEBI" id="CHEBI:30616"/>
    </ligand>
</feature>
<reference key="1">
    <citation type="journal article" date="2006" name="PLoS Genet.">
        <title>Who ate whom? Adaptive Helicobacter genomic changes that accompanied a host jump from early humans to large felines.</title>
        <authorList>
            <person name="Eppinger M."/>
            <person name="Baar C."/>
            <person name="Linz B."/>
            <person name="Raddatz G."/>
            <person name="Lanz C."/>
            <person name="Keller H."/>
            <person name="Morelli G."/>
            <person name="Gressmann H."/>
            <person name="Achtman M."/>
            <person name="Schuster S.C."/>
        </authorList>
    </citation>
    <scope>NUCLEOTIDE SEQUENCE [LARGE SCALE GENOMIC DNA]</scope>
    <source>
        <strain>Sheeba</strain>
    </source>
</reference>
<name>SYC_HELAH</name>
<comment type="catalytic activity">
    <reaction evidence="1">
        <text>tRNA(Cys) + L-cysteine + ATP = L-cysteinyl-tRNA(Cys) + AMP + diphosphate</text>
        <dbReference type="Rhea" id="RHEA:17773"/>
        <dbReference type="Rhea" id="RHEA-COMP:9661"/>
        <dbReference type="Rhea" id="RHEA-COMP:9679"/>
        <dbReference type="ChEBI" id="CHEBI:30616"/>
        <dbReference type="ChEBI" id="CHEBI:33019"/>
        <dbReference type="ChEBI" id="CHEBI:35235"/>
        <dbReference type="ChEBI" id="CHEBI:78442"/>
        <dbReference type="ChEBI" id="CHEBI:78517"/>
        <dbReference type="ChEBI" id="CHEBI:456215"/>
        <dbReference type="EC" id="6.1.1.16"/>
    </reaction>
</comment>
<comment type="cofactor">
    <cofactor evidence="1">
        <name>Zn(2+)</name>
        <dbReference type="ChEBI" id="CHEBI:29105"/>
    </cofactor>
    <text evidence="1">Binds 1 zinc ion per subunit.</text>
</comment>
<comment type="subunit">
    <text evidence="1">Monomer.</text>
</comment>
<comment type="subcellular location">
    <subcellularLocation>
        <location evidence="1">Cytoplasm</location>
    </subcellularLocation>
</comment>
<comment type="similarity">
    <text evidence="1">Belongs to the class-I aminoacyl-tRNA synthetase family.</text>
</comment>
<proteinExistence type="inferred from homology"/>
<accession>Q17WH3</accession>
<organism>
    <name type="scientific">Helicobacter acinonychis (strain Sheeba)</name>
    <dbReference type="NCBI Taxonomy" id="382638"/>
    <lineage>
        <taxon>Bacteria</taxon>
        <taxon>Pseudomonadati</taxon>
        <taxon>Campylobacterota</taxon>
        <taxon>Epsilonproteobacteria</taxon>
        <taxon>Campylobacterales</taxon>
        <taxon>Helicobacteraceae</taxon>
        <taxon>Helicobacter</taxon>
    </lineage>
</organism>
<dbReference type="EC" id="6.1.1.16" evidence="1"/>
<dbReference type="EMBL" id="AM260522">
    <property type="protein sequence ID" value="CAK00003.1"/>
    <property type="molecule type" value="Genomic_DNA"/>
</dbReference>
<dbReference type="RefSeq" id="WP_011578109.1">
    <property type="nucleotide sequence ID" value="NC_008229.1"/>
</dbReference>
<dbReference type="SMR" id="Q17WH3"/>
<dbReference type="STRING" id="382638.Hac_1251"/>
<dbReference type="GeneID" id="31758592"/>
<dbReference type="KEGG" id="hac:Hac_1251"/>
<dbReference type="eggNOG" id="COG0215">
    <property type="taxonomic scope" value="Bacteria"/>
</dbReference>
<dbReference type="HOGENOM" id="CLU_013528_0_1_7"/>
<dbReference type="OrthoDB" id="9815130at2"/>
<dbReference type="BioCyc" id="HACI382638:HAC_RS05400-MONOMER"/>
<dbReference type="Proteomes" id="UP000000775">
    <property type="component" value="Chromosome"/>
</dbReference>
<dbReference type="GO" id="GO:0005829">
    <property type="term" value="C:cytosol"/>
    <property type="evidence" value="ECO:0007669"/>
    <property type="project" value="TreeGrafter"/>
</dbReference>
<dbReference type="GO" id="GO:0005524">
    <property type="term" value="F:ATP binding"/>
    <property type="evidence" value="ECO:0007669"/>
    <property type="project" value="UniProtKB-UniRule"/>
</dbReference>
<dbReference type="GO" id="GO:0004817">
    <property type="term" value="F:cysteine-tRNA ligase activity"/>
    <property type="evidence" value="ECO:0007669"/>
    <property type="project" value="UniProtKB-UniRule"/>
</dbReference>
<dbReference type="GO" id="GO:0008270">
    <property type="term" value="F:zinc ion binding"/>
    <property type="evidence" value="ECO:0007669"/>
    <property type="project" value="UniProtKB-UniRule"/>
</dbReference>
<dbReference type="GO" id="GO:0006423">
    <property type="term" value="P:cysteinyl-tRNA aminoacylation"/>
    <property type="evidence" value="ECO:0007669"/>
    <property type="project" value="UniProtKB-UniRule"/>
</dbReference>
<dbReference type="CDD" id="cd00672">
    <property type="entry name" value="CysRS_core"/>
    <property type="match status" value="1"/>
</dbReference>
<dbReference type="Gene3D" id="1.20.120.1910">
    <property type="entry name" value="Cysteine-tRNA ligase, C-terminal anti-codon recognition domain"/>
    <property type="match status" value="1"/>
</dbReference>
<dbReference type="Gene3D" id="3.40.50.620">
    <property type="entry name" value="HUPs"/>
    <property type="match status" value="1"/>
</dbReference>
<dbReference type="HAMAP" id="MF_00041">
    <property type="entry name" value="Cys_tRNA_synth"/>
    <property type="match status" value="1"/>
</dbReference>
<dbReference type="InterPro" id="IPR015803">
    <property type="entry name" value="Cys-tRNA-ligase"/>
</dbReference>
<dbReference type="InterPro" id="IPR015273">
    <property type="entry name" value="Cys-tRNA-synt_Ia_DALR"/>
</dbReference>
<dbReference type="InterPro" id="IPR024909">
    <property type="entry name" value="Cys-tRNA/MSH_ligase"/>
</dbReference>
<dbReference type="InterPro" id="IPR014729">
    <property type="entry name" value="Rossmann-like_a/b/a_fold"/>
</dbReference>
<dbReference type="InterPro" id="IPR032678">
    <property type="entry name" value="tRNA-synt_1_cat_dom"/>
</dbReference>
<dbReference type="InterPro" id="IPR009080">
    <property type="entry name" value="tRNAsynth_Ia_anticodon-bd"/>
</dbReference>
<dbReference type="NCBIfam" id="TIGR00435">
    <property type="entry name" value="cysS"/>
    <property type="match status" value="1"/>
</dbReference>
<dbReference type="PANTHER" id="PTHR10890:SF3">
    <property type="entry name" value="CYSTEINE--TRNA LIGASE, CYTOPLASMIC"/>
    <property type="match status" value="1"/>
</dbReference>
<dbReference type="PANTHER" id="PTHR10890">
    <property type="entry name" value="CYSTEINYL-TRNA SYNTHETASE"/>
    <property type="match status" value="1"/>
</dbReference>
<dbReference type="Pfam" id="PF09190">
    <property type="entry name" value="DALR_2"/>
    <property type="match status" value="1"/>
</dbReference>
<dbReference type="Pfam" id="PF01406">
    <property type="entry name" value="tRNA-synt_1e"/>
    <property type="match status" value="1"/>
</dbReference>
<dbReference type="PRINTS" id="PR00983">
    <property type="entry name" value="TRNASYNTHCYS"/>
</dbReference>
<dbReference type="SMART" id="SM00840">
    <property type="entry name" value="DALR_2"/>
    <property type="match status" value="1"/>
</dbReference>
<dbReference type="SUPFAM" id="SSF47323">
    <property type="entry name" value="Anticodon-binding domain of a subclass of class I aminoacyl-tRNA synthetases"/>
    <property type="match status" value="1"/>
</dbReference>
<dbReference type="SUPFAM" id="SSF52374">
    <property type="entry name" value="Nucleotidylyl transferase"/>
    <property type="match status" value="1"/>
</dbReference>